<dbReference type="EMBL" id="AAHF01000004">
    <property type="protein sequence ID" value="EAL90312.1"/>
    <property type="molecule type" value="Genomic_DNA"/>
</dbReference>
<dbReference type="RefSeq" id="XP_752350.1">
    <property type="nucleotide sequence ID" value="XM_747257.1"/>
</dbReference>
<dbReference type="PDB" id="3SZ7">
    <property type="method" value="X-ray"/>
    <property type="resolution" value="1.72 A"/>
    <property type="chains" value="A=109-267"/>
</dbReference>
<dbReference type="PDBsum" id="3SZ7"/>
<dbReference type="SMR" id="Q4WTC0"/>
<dbReference type="FunCoup" id="Q4WTC0">
    <property type="interactions" value="599"/>
</dbReference>
<dbReference type="STRING" id="330879.Q4WTC0"/>
<dbReference type="EnsemblFungi" id="EAL90312">
    <property type="protein sequence ID" value="EAL90312"/>
    <property type="gene ID" value="AFUA_1G09830"/>
</dbReference>
<dbReference type="GeneID" id="3510472"/>
<dbReference type="KEGG" id="afm:AFUA_1G09830"/>
<dbReference type="eggNOG" id="KOG0553">
    <property type="taxonomic scope" value="Eukaryota"/>
</dbReference>
<dbReference type="HOGENOM" id="CLU_044224_1_1_1"/>
<dbReference type="InParanoid" id="Q4WTC0"/>
<dbReference type="OMA" id="DMARNMM"/>
<dbReference type="OrthoDB" id="2335338at2759"/>
<dbReference type="EvolutionaryTrace" id="Q4WTC0"/>
<dbReference type="Proteomes" id="UP000002530">
    <property type="component" value="Chromosome 1"/>
</dbReference>
<dbReference type="GO" id="GO:0016020">
    <property type="term" value="C:membrane"/>
    <property type="evidence" value="ECO:0000318"/>
    <property type="project" value="GO_Central"/>
</dbReference>
<dbReference type="GO" id="GO:0072380">
    <property type="term" value="C:TRC complex"/>
    <property type="evidence" value="ECO:0000318"/>
    <property type="project" value="GO_Central"/>
</dbReference>
<dbReference type="GO" id="GO:0042802">
    <property type="term" value="F:identical protein binding"/>
    <property type="evidence" value="ECO:0007669"/>
    <property type="project" value="EnsemblFungi"/>
</dbReference>
<dbReference type="GO" id="GO:0060090">
    <property type="term" value="F:molecular adaptor activity"/>
    <property type="evidence" value="ECO:0000318"/>
    <property type="project" value="GO_Central"/>
</dbReference>
<dbReference type="GO" id="GO:0004722">
    <property type="term" value="F:protein serine/threonine phosphatase activity"/>
    <property type="evidence" value="ECO:0007669"/>
    <property type="project" value="UniProtKB-EC"/>
</dbReference>
<dbReference type="GO" id="GO:0006620">
    <property type="term" value="P:post-translational protein targeting to endoplasmic reticulum membrane"/>
    <property type="evidence" value="ECO:0000318"/>
    <property type="project" value="GO_Central"/>
</dbReference>
<dbReference type="GO" id="GO:0009408">
    <property type="term" value="P:response to heat"/>
    <property type="evidence" value="ECO:0007669"/>
    <property type="project" value="EnsemblFungi"/>
</dbReference>
<dbReference type="FunFam" id="1.20.5.420:FF:000005">
    <property type="entry name" value="Hsc70 cochaperone (SGT), putative"/>
    <property type="match status" value="1"/>
</dbReference>
<dbReference type="FunFam" id="1.25.40.10:FF:000207">
    <property type="entry name" value="Small glutamine-rich tetratricopeptide repeat-containing protein"/>
    <property type="match status" value="1"/>
</dbReference>
<dbReference type="FunFam" id="1.10.260.100:FF:000011">
    <property type="entry name" value="TPR Domain containing protein"/>
    <property type="match status" value="1"/>
</dbReference>
<dbReference type="Gene3D" id="1.10.260.100">
    <property type="match status" value="1"/>
</dbReference>
<dbReference type="Gene3D" id="1.20.5.420">
    <property type="entry name" value="Immunoglobulin FC, subunit C"/>
    <property type="match status" value="1"/>
</dbReference>
<dbReference type="Gene3D" id="1.25.40.10">
    <property type="entry name" value="Tetratricopeptide repeat domain"/>
    <property type="match status" value="1"/>
</dbReference>
<dbReference type="InterPro" id="IPR047150">
    <property type="entry name" value="SGT"/>
</dbReference>
<dbReference type="InterPro" id="IPR032374">
    <property type="entry name" value="SGTA_dimer"/>
</dbReference>
<dbReference type="InterPro" id="IPR006636">
    <property type="entry name" value="STI1_HS-bd"/>
</dbReference>
<dbReference type="InterPro" id="IPR011990">
    <property type="entry name" value="TPR-like_helical_dom_sf"/>
</dbReference>
<dbReference type="InterPro" id="IPR019734">
    <property type="entry name" value="TPR_rpt"/>
</dbReference>
<dbReference type="PANTHER" id="PTHR45831">
    <property type="entry name" value="LD24721P"/>
    <property type="match status" value="1"/>
</dbReference>
<dbReference type="PANTHER" id="PTHR45831:SF2">
    <property type="entry name" value="LD24721P"/>
    <property type="match status" value="1"/>
</dbReference>
<dbReference type="Pfam" id="PF16546">
    <property type="entry name" value="SGTA_dimer"/>
    <property type="match status" value="1"/>
</dbReference>
<dbReference type="Pfam" id="PF13414">
    <property type="entry name" value="TPR_11"/>
    <property type="match status" value="1"/>
</dbReference>
<dbReference type="Pfam" id="PF13181">
    <property type="entry name" value="TPR_8"/>
    <property type="match status" value="1"/>
</dbReference>
<dbReference type="SMART" id="SM00727">
    <property type="entry name" value="STI1"/>
    <property type="match status" value="1"/>
</dbReference>
<dbReference type="SMART" id="SM00028">
    <property type="entry name" value="TPR"/>
    <property type="match status" value="3"/>
</dbReference>
<dbReference type="SUPFAM" id="SSF48452">
    <property type="entry name" value="TPR-like"/>
    <property type="match status" value="1"/>
</dbReference>
<dbReference type="PROSITE" id="PS50005">
    <property type="entry name" value="TPR"/>
    <property type="match status" value="3"/>
</dbReference>
<protein>
    <recommendedName>
        <fullName evidence="7">Heat-shock protein cognate (HSC) co-chaperone sgt12</fullName>
    </recommendedName>
</protein>
<proteinExistence type="evidence at protein level"/>
<reference key="1">
    <citation type="journal article" date="2005" name="Nature">
        <title>Genomic sequence of the pathogenic and allergenic filamentous fungus Aspergillus fumigatus.</title>
        <authorList>
            <person name="Nierman W.C."/>
            <person name="Pain A."/>
            <person name="Anderson M.J."/>
            <person name="Wortman J.R."/>
            <person name="Kim H.S."/>
            <person name="Arroyo J."/>
            <person name="Berriman M."/>
            <person name="Abe K."/>
            <person name="Archer D.B."/>
            <person name="Bermejo C."/>
            <person name="Bennett J.W."/>
            <person name="Bowyer P."/>
            <person name="Chen D."/>
            <person name="Collins M."/>
            <person name="Coulsen R."/>
            <person name="Davies R."/>
            <person name="Dyer P.S."/>
            <person name="Farman M.L."/>
            <person name="Fedorova N."/>
            <person name="Fedorova N.D."/>
            <person name="Feldblyum T.V."/>
            <person name="Fischer R."/>
            <person name="Fosker N."/>
            <person name="Fraser A."/>
            <person name="Garcia J.L."/>
            <person name="Garcia M.J."/>
            <person name="Goble A."/>
            <person name="Goldman G.H."/>
            <person name="Gomi K."/>
            <person name="Griffith-Jones S."/>
            <person name="Gwilliam R."/>
            <person name="Haas B.J."/>
            <person name="Haas H."/>
            <person name="Harris D.E."/>
            <person name="Horiuchi H."/>
            <person name="Huang J."/>
            <person name="Humphray S."/>
            <person name="Jimenez J."/>
            <person name="Keller N."/>
            <person name="Khouri H."/>
            <person name="Kitamoto K."/>
            <person name="Kobayashi T."/>
            <person name="Konzack S."/>
            <person name="Kulkarni R."/>
            <person name="Kumagai T."/>
            <person name="Lafton A."/>
            <person name="Latge J.-P."/>
            <person name="Li W."/>
            <person name="Lord A."/>
            <person name="Lu C."/>
            <person name="Majoros W.H."/>
            <person name="May G.S."/>
            <person name="Miller B.L."/>
            <person name="Mohamoud Y."/>
            <person name="Molina M."/>
            <person name="Monod M."/>
            <person name="Mouyna I."/>
            <person name="Mulligan S."/>
            <person name="Murphy L.D."/>
            <person name="O'Neil S."/>
            <person name="Paulsen I."/>
            <person name="Penalva M.A."/>
            <person name="Pertea M."/>
            <person name="Price C."/>
            <person name="Pritchard B.L."/>
            <person name="Quail M.A."/>
            <person name="Rabbinowitsch E."/>
            <person name="Rawlins N."/>
            <person name="Rajandream M.A."/>
            <person name="Reichard U."/>
            <person name="Renauld H."/>
            <person name="Robson G.D."/>
            <person name="Rodriguez de Cordoba S."/>
            <person name="Rodriguez-Pena J.M."/>
            <person name="Ronning C.M."/>
            <person name="Rutter S."/>
            <person name="Salzberg S.L."/>
            <person name="Sanchez M."/>
            <person name="Sanchez-Ferrero J.C."/>
            <person name="Saunders D."/>
            <person name="Seeger K."/>
            <person name="Squares R."/>
            <person name="Squares S."/>
            <person name="Takeuchi M."/>
            <person name="Tekaia F."/>
            <person name="Turner G."/>
            <person name="Vazquez de Aldana C.R."/>
            <person name="Weidman J."/>
            <person name="White O."/>
            <person name="Woodward J.R."/>
            <person name="Yu J.-H."/>
            <person name="Fraser C.M."/>
            <person name="Galagan J.E."/>
            <person name="Asai K."/>
            <person name="Machida M."/>
            <person name="Hall N."/>
            <person name="Barrell B.G."/>
            <person name="Denning D.W."/>
        </authorList>
    </citation>
    <scope>NUCLEOTIDE SEQUENCE [LARGE SCALE GENOMIC DNA]</scope>
    <source>
        <strain>ATCC MYA-4609 / CBS 101355 / FGSC A1100 / Af293</strain>
    </source>
</reference>
<reference key="2">
    <citation type="journal article" date="2012" name="J. Biol. Chem.">
        <title>Get5 carboxyl-terminal domain is a novel dimerization motif that tethers an extended Get4/Get5 complex.</title>
        <authorList>
            <person name="Chartron J.W."/>
            <person name="VanderVelde D.G."/>
            <person name="Rao M."/>
            <person name="Clemons W.M."/>
        </authorList>
    </citation>
    <scope>FUNCTION</scope>
    <scope>SUBUNIT</scope>
</reference>
<reference evidence="9" key="3">
    <citation type="journal article" date="2011" name="J. Biol. Chem.">
        <title>A structural model of the Sgt2 protein and its interactions with chaperones and the Get4/Get5 complex.</title>
        <authorList>
            <person name="Chartron J.W."/>
            <person name="Gonzalez G.M."/>
            <person name="Clemons W.M."/>
        </authorList>
    </citation>
    <scope>X-RAY CRYSTALLOGRAPHY (1.72 ANGSTROMS) OF 109-267</scope>
    <scope>FUNCTION</scope>
    <scope>SUBUNIT</scope>
    <scope>INTERACTION WITH GET5; SSA1; SSE1; HSC82 AND HSP107</scope>
    <scope>MUTAGENESIS OF TYR-181; LYS-183 AND ARG-187</scope>
</reference>
<gene>
    <name evidence="7" type="primary">sgt12</name>
    <name type="ORF">AFUA_1G09830</name>
</gene>
<sequence>MVRLSDTPAPTESQKRLALAIIDFLNSSLKDGTLTADDAESIEIAQSCIADTFKVDPSDEAAVKDALGGQSLASIFSVYEKLRQKPSKEPASAGAQAQSTEAQQPKAGAPTPESDKLKSEGNAAMARKEYSKAIDLYTQALSIAPANPIYLSNRAAAYSASGQHEKAAEDAELATVVDPKYSKAWSRLGLARFDMADYKGAKEAYEKGIEAEGNGGSDAMKRGLETTKRKIEEANRGAEPPADDVDDAAGASRGAGGMPDLSSLASMLGGRGGGGGGMPDLSSIMSNPMFASMAQNLMSNPDMLNNLMNNPQLRQMAENFGRGGGMPDMSSLMSDPSLAEM</sequence>
<name>SGT12_ASPFU</name>
<accession>Q4WTC0</accession>
<feature type="chain" id="PRO_0000459360" description="Heat-shock protein cognate (HSC) co-chaperone sgt12">
    <location>
        <begin position="1"/>
        <end position="341"/>
    </location>
</feature>
<feature type="repeat" description="TPR 1" evidence="2">
    <location>
        <begin position="114"/>
        <end position="147"/>
    </location>
</feature>
<feature type="repeat" description="TPR 2" evidence="2">
    <location>
        <begin position="148"/>
        <end position="181"/>
    </location>
</feature>
<feature type="repeat" description="TPR 3" evidence="2">
    <location>
        <begin position="182"/>
        <end position="215"/>
    </location>
</feature>
<feature type="region of interest" description="Disordered" evidence="3">
    <location>
        <begin position="86"/>
        <end position="123"/>
    </location>
</feature>
<feature type="region of interest" description="Disordered" evidence="3">
    <location>
        <begin position="232"/>
        <end position="280"/>
    </location>
</feature>
<feature type="compositionally biased region" description="Gly residues" evidence="3">
    <location>
        <begin position="269"/>
        <end position="278"/>
    </location>
</feature>
<feature type="mutagenesis site" description="Impairs binding to HSC proteins; when associated with A-183 and A-187." evidence="6">
    <original>Y</original>
    <variation>A</variation>
    <location>
        <position position="181"/>
    </location>
</feature>
<feature type="mutagenesis site" description="Impairs binding to HSC proteins; when associated with A-181 and A-187." evidence="6">
    <original>K</original>
    <variation>A</variation>
    <location>
        <position position="183"/>
    </location>
</feature>
<feature type="mutagenesis site" description="Impairs binding to HSC proteins; when associated with A-181 and A-183." evidence="6">
    <original>R</original>
    <variation>A</variation>
    <location>
        <position position="187"/>
    </location>
</feature>
<feature type="helix" evidence="10">
    <location>
        <begin position="112"/>
        <end position="126"/>
    </location>
</feature>
<feature type="helix" evidence="10">
    <location>
        <begin position="130"/>
        <end position="143"/>
    </location>
</feature>
<feature type="helix" evidence="10">
    <location>
        <begin position="148"/>
        <end position="160"/>
    </location>
</feature>
<feature type="helix" evidence="10">
    <location>
        <begin position="164"/>
        <end position="177"/>
    </location>
</feature>
<feature type="helix" evidence="10">
    <location>
        <begin position="182"/>
        <end position="194"/>
    </location>
</feature>
<feature type="helix" evidence="10">
    <location>
        <begin position="198"/>
        <end position="212"/>
    </location>
</feature>
<feature type="strand" evidence="10">
    <location>
        <begin position="213"/>
        <end position="215"/>
    </location>
</feature>
<feature type="helix" evidence="10">
    <location>
        <begin position="218"/>
        <end position="236"/>
    </location>
</feature>
<feature type="helix" evidence="10">
    <location>
        <begin position="250"/>
        <end position="253"/>
    </location>
</feature>
<keyword id="KW-0002">3D-structure</keyword>
<keyword id="KW-0143">Chaperone</keyword>
<keyword id="KW-0963">Cytoplasm</keyword>
<keyword id="KW-1185">Reference proteome</keyword>
<keyword id="KW-0677">Repeat</keyword>
<keyword id="KW-0802">TPR repeat</keyword>
<comment type="function">
    <text evidence="4 5">Heat-shock protein cognate (HSC) co-chaperone that preferentially binds endoplasmic reticulum-destined tail-anchored (TA) proteins and directs them to the GET (guided entry of TA proteins) pathway via get4 and get5 (PubMed:21832041, PubMed:22262836). Get4 and get5 form an obligate complex that catalyzes the transfer of tail-anchored proteins destined to the endoplasmic reticulum from sgt2 to the cytosolic targeting factor which then targets the TA protein to the ER membrane via get1/get2 (PubMed:21832041, PubMed:22262836).</text>
</comment>
<comment type="subunit">
    <text evidence="4 5">Forms homodimers (PubMed:21832041). Component of the get4/get5/sgt2 sorting complex (PubMed:21832041, PubMed:22262836). Dimers of sgt2 bind directly a single get5 (PubMed:21832041). Binds HSC family members ssa1, sse1, hsp104 and hsc82 via its TPR domain (PubMed:21832041).</text>
</comment>
<comment type="subcellular location">
    <subcellularLocation>
        <location evidence="1">Cytoplasm</location>
    </subcellularLocation>
</comment>
<comment type="domain">
    <text evidence="4">The tetratrico-repeat (TPR) region has the ability to directly bind multiple HSC family members including ssa1, sse1, hsp104 and hsc82.</text>
</comment>
<comment type="similarity">
    <text evidence="8">Belongs to the SGT family.</text>
</comment>
<evidence type="ECO:0000250" key="1">
    <source>
        <dbReference type="UniProtKB" id="Q12118"/>
    </source>
</evidence>
<evidence type="ECO:0000255" key="2">
    <source>
        <dbReference type="PROSITE-ProRule" id="PRU00339"/>
    </source>
</evidence>
<evidence type="ECO:0000256" key="3">
    <source>
        <dbReference type="SAM" id="MobiDB-lite"/>
    </source>
</evidence>
<evidence type="ECO:0000269" key="4">
    <source>
    </source>
</evidence>
<evidence type="ECO:0000269" key="5">
    <source>
    </source>
</evidence>
<evidence type="ECO:0000303" key="6">
    <source>
    </source>
</evidence>
<evidence type="ECO:0000303" key="7">
    <source>
    </source>
</evidence>
<evidence type="ECO:0000305" key="8"/>
<evidence type="ECO:0007744" key="9">
    <source>
        <dbReference type="PDB" id="3SZ7"/>
    </source>
</evidence>
<evidence type="ECO:0007829" key="10">
    <source>
        <dbReference type="PDB" id="3SZ7"/>
    </source>
</evidence>
<organism>
    <name type="scientific">Aspergillus fumigatus (strain ATCC MYA-4609 / CBS 101355 / FGSC A1100 / Af293)</name>
    <name type="common">Neosartorya fumigata</name>
    <dbReference type="NCBI Taxonomy" id="330879"/>
    <lineage>
        <taxon>Eukaryota</taxon>
        <taxon>Fungi</taxon>
        <taxon>Dikarya</taxon>
        <taxon>Ascomycota</taxon>
        <taxon>Pezizomycotina</taxon>
        <taxon>Eurotiomycetes</taxon>
        <taxon>Eurotiomycetidae</taxon>
        <taxon>Eurotiales</taxon>
        <taxon>Aspergillaceae</taxon>
        <taxon>Aspergillus</taxon>
        <taxon>Aspergillus subgen. Fumigati</taxon>
    </lineage>
</organism>